<sequence length="83" mass="9333">MKTLLLTLVVVTIVCLDLGYTLKCHNTQLPFIYKTCPEGKNLCFKATLRKFPLKFPVKRGCADNCPKNSALLKYVCCSTDKCN</sequence>
<accession>Q9W716</accession>
<keyword id="KW-0204">Cytolysis</keyword>
<keyword id="KW-1015">Disulfide bond</keyword>
<keyword id="KW-0472">Membrane</keyword>
<keyword id="KW-0964">Secreted</keyword>
<keyword id="KW-0732">Signal</keyword>
<keyword id="KW-1052">Target cell membrane</keyword>
<keyword id="KW-1053">Target membrane</keyword>
<comment type="function">
    <text evidence="2">Has low cytotoxic activity.</text>
</comment>
<comment type="subcellular location">
    <subcellularLocation>
        <location evidence="4">Secreted</location>
    </subcellularLocation>
    <subcellularLocation>
        <location evidence="4">Target cell membrane</location>
    </subcellularLocation>
</comment>
<comment type="tissue specificity">
    <text evidence="5">Expressed by the venom gland.</text>
</comment>
<comment type="miscellaneous">
    <text evidence="5">Is classified as a P-type cytotoxin, since a proline residue stands at position 52 (Pro-31 in standard classification).</text>
</comment>
<comment type="similarity">
    <text evidence="5">Belongs to the three-finger toxin family. Short-chain subfamily. Orphan group XV sub-subfamily.</text>
</comment>
<reference key="1">
    <citation type="submission" date="1998-07" db="EMBL/GenBank/DDBJ databases">
        <authorList>
            <person name="Qian Y.-C."/>
            <person name="Fang C.-Y."/>
            <person name="Gong Y."/>
            <person name="Yang S.-L."/>
        </authorList>
    </citation>
    <scope>NUCLEOTIDE SEQUENCE [MRNA]</scope>
    <source>
        <tissue>Venom gland</tissue>
    </source>
</reference>
<evidence type="ECO:0000250" key="1"/>
<evidence type="ECO:0000250" key="2">
    <source>
        <dbReference type="UniProtKB" id="P14541"/>
    </source>
</evidence>
<evidence type="ECO:0000250" key="3">
    <source>
        <dbReference type="UniProtKB" id="P60301"/>
    </source>
</evidence>
<evidence type="ECO:0000250" key="4">
    <source>
        <dbReference type="UniProtKB" id="P62375"/>
    </source>
</evidence>
<evidence type="ECO:0000305" key="5"/>
<evidence type="ECO:0000312" key="6">
    <source>
        <dbReference type="EMBL" id="CAB50697.1"/>
    </source>
</evidence>
<feature type="signal peptide" evidence="1">
    <location>
        <begin position="1"/>
        <end position="21"/>
    </location>
</feature>
<feature type="chain" id="PRO_0000035378" description="Cytotoxin homolog 5V">
    <location>
        <begin position="22"/>
        <end position="83"/>
    </location>
</feature>
<feature type="disulfide bond" evidence="3">
    <location>
        <begin position="24"/>
        <end position="43"/>
    </location>
</feature>
<feature type="disulfide bond" evidence="3">
    <location>
        <begin position="36"/>
        <end position="61"/>
    </location>
</feature>
<feature type="disulfide bond" evidence="3">
    <location>
        <begin position="65"/>
        <end position="76"/>
    </location>
</feature>
<feature type="disulfide bond" evidence="3">
    <location>
        <begin position="77"/>
        <end position="82"/>
    </location>
</feature>
<protein>
    <recommendedName>
        <fullName>Cytotoxin homolog 5V</fullName>
    </recommendedName>
    <alternativeName>
        <fullName>Cardiotoxin-5V</fullName>
        <shortName evidence="6">CTX5V</shortName>
    </alternativeName>
</protein>
<dbReference type="EMBL" id="AJ007765">
    <property type="protein sequence ID" value="CAB50697.1"/>
    <property type="molecule type" value="mRNA"/>
</dbReference>
<dbReference type="SMR" id="Q9W716"/>
<dbReference type="GO" id="GO:0005576">
    <property type="term" value="C:extracellular region"/>
    <property type="evidence" value="ECO:0007669"/>
    <property type="project" value="UniProtKB-SubCell"/>
</dbReference>
<dbReference type="GO" id="GO:0016020">
    <property type="term" value="C:membrane"/>
    <property type="evidence" value="ECO:0007669"/>
    <property type="project" value="UniProtKB-KW"/>
</dbReference>
<dbReference type="GO" id="GO:0044218">
    <property type="term" value="C:other organism cell membrane"/>
    <property type="evidence" value="ECO:0007669"/>
    <property type="project" value="UniProtKB-KW"/>
</dbReference>
<dbReference type="GO" id="GO:0090729">
    <property type="term" value="F:toxin activity"/>
    <property type="evidence" value="ECO:0007669"/>
    <property type="project" value="InterPro"/>
</dbReference>
<dbReference type="GO" id="GO:0031640">
    <property type="term" value="P:killing of cells of another organism"/>
    <property type="evidence" value="ECO:0007669"/>
    <property type="project" value="UniProtKB-KW"/>
</dbReference>
<dbReference type="CDD" id="cd00206">
    <property type="entry name" value="TFP_snake_toxin"/>
    <property type="match status" value="1"/>
</dbReference>
<dbReference type="FunFam" id="2.10.60.10:FF:000024">
    <property type="entry name" value="Cytotoxin 1"/>
    <property type="match status" value="1"/>
</dbReference>
<dbReference type="Gene3D" id="2.10.60.10">
    <property type="entry name" value="CD59"/>
    <property type="match status" value="1"/>
</dbReference>
<dbReference type="InterPro" id="IPR003572">
    <property type="entry name" value="Cytotoxin_Cobra"/>
</dbReference>
<dbReference type="InterPro" id="IPR003571">
    <property type="entry name" value="Snake_3FTx"/>
</dbReference>
<dbReference type="InterPro" id="IPR045860">
    <property type="entry name" value="Snake_toxin-like_sf"/>
</dbReference>
<dbReference type="InterPro" id="IPR018354">
    <property type="entry name" value="Snake_toxin_con_site"/>
</dbReference>
<dbReference type="InterPro" id="IPR054131">
    <property type="entry name" value="Toxin_cobra-type"/>
</dbReference>
<dbReference type="Pfam" id="PF21947">
    <property type="entry name" value="Toxin_cobra-type"/>
    <property type="match status" value="1"/>
</dbReference>
<dbReference type="PRINTS" id="PR00282">
    <property type="entry name" value="CYTOTOXIN"/>
</dbReference>
<dbReference type="SUPFAM" id="SSF57302">
    <property type="entry name" value="Snake toxin-like"/>
    <property type="match status" value="1"/>
</dbReference>
<dbReference type="PROSITE" id="PS00272">
    <property type="entry name" value="SNAKE_TOXIN"/>
    <property type="match status" value="1"/>
</dbReference>
<organism>
    <name type="scientific">Naja atra</name>
    <name type="common">Chinese cobra</name>
    <dbReference type="NCBI Taxonomy" id="8656"/>
    <lineage>
        <taxon>Eukaryota</taxon>
        <taxon>Metazoa</taxon>
        <taxon>Chordata</taxon>
        <taxon>Craniata</taxon>
        <taxon>Vertebrata</taxon>
        <taxon>Euteleostomi</taxon>
        <taxon>Lepidosauria</taxon>
        <taxon>Squamata</taxon>
        <taxon>Bifurcata</taxon>
        <taxon>Unidentata</taxon>
        <taxon>Episquamata</taxon>
        <taxon>Toxicofera</taxon>
        <taxon>Serpentes</taxon>
        <taxon>Colubroidea</taxon>
        <taxon>Elapidae</taxon>
        <taxon>Elapinae</taxon>
        <taxon>Naja</taxon>
    </lineage>
</organism>
<name>3SOFV_NAJAT</name>
<proteinExistence type="inferred from homology"/>